<proteinExistence type="inferred from homology"/>
<evidence type="ECO:0000255" key="1">
    <source>
        <dbReference type="HAMAP-Rule" id="MF_01409"/>
    </source>
</evidence>
<evidence type="ECO:0000305" key="2"/>
<organism>
    <name type="scientific">Archaeoglobus fulgidus (strain ATCC 49558 / DSM 4304 / JCM 9628 / NBRC 100126 / VC-16)</name>
    <dbReference type="NCBI Taxonomy" id="224325"/>
    <lineage>
        <taxon>Archaea</taxon>
        <taxon>Methanobacteriati</taxon>
        <taxon>Methanobacteriota</taxon>
        <taxon>Archaeoglobi</taxon>
        <taxon>Archaeoglobales</taxon>
        <taxon>Archaeoglobaceae</taxon>
        <taxon>Archaeoglobus</taxon>
    </lineage>
</organism>
<keyword id="KW-0012">Acyltransferase</keyword>
<keyword id="KW-0414">Isoprene biosynthesis</keyword>
<keyword id="KW-1185">Reference proteome</keyword>
<keyword id="KW-0808">Transferase</keyword>
<dbReference type="EC" id="2.3.3.10" evidence="1"/>
<dbReference type="EMBL" id="AE000782">
    <property type="protein sequence ID" value="AAB91251.1"/>
    <property type="status" value="ALT_FRAME"/>
    <property type="molecule type" value="Genomic_DNA"/>
</dbReference>
<dbReference type="PIR" id="H69551">
    <property type="entry name" value="H69551"/>
</dbReference>
<dbReference type="SMR" id="O30256"/>
<dbReference type="STRING" id="224325.AF_2415"/>
<dbReference type="PaxDb" id="224325-AF_2415"/>
<dbReference type="EnsemblBacteria" id="AAB91251">
    <property type="protein sequence ID" value="AAB91251"/>
    <property type="gene ID" value="AF_2415"/>
</dbReference>
<dbReference type="KEGG" id="afu:AF_2415"/>
<dbReference type="eggNOG" id="arCOG01767">
    <property type="taxonomic scope" value="Archaea"/>
</dbReference>
<dbReference type="HOGENOM" id="CLU_039592_7_0_2"/>
<dbReference type="PhylomeDB" id="O30256"/>
<dbReference type="UniPathway" id="UPA00058">
    <property type="reaction ID" value="UER00102"/>
</dbReference>
<dbReference type="Proteomes" id="UP000002199">
    <property type="component" value="Chromosome"/>
</dbReference>
<dbReference type="GO" id="GO:0003985">
    <property type="term" value="F:acetyl-CoA C-acetyltransferase activity"/>
    <property type="evidence" value="ECO:0007669"/>
    <property type="project" value="UniProtKB-UniRule"/>
</dbReference>
<dbReference type="GO" id="GO:0004421">
    <property type="term" value="F:hydroxymethylglutaryl-CoA synthase activity"/>
    <property type="evidence" value="ECO:0007669"/>
    <property type="project" value="InterPro"/>
</dbReference>
<dbReference type="GO" id="GO:0010142">
    <property type="term" value="P:farnesyl diphosphate biosynthetic process, mevalonate pathway"/>
    <property type="evidence" value="ECO:0007669"/>
    <property type="project" value="TreeGrafter"/>
</dbReference>
<dbReference type="GO" id="GO:0019287">
    <property type="term" value="P:isopentenyl diphosphate biosynthetic process, mevalonate pathway"/>
    <property type="evidence" value="ECO:0007669"/>
    <property type="project" value="UniProtKB-UniRule"/>
</dbReference>
<dbReference type="CDD" id="cd00827">
    <property type="entry name" value="init_cond_enzymes"/>
    <property type="match status" value="1"/>
</dbReference>
<dbReference type="Gene3D" id="3.40.47.10">
    <property type="match status" value="1"/>
</dbReference>
<dbReference type="HAMAP" id="MF_01409">
    <property type="entry name" value="HMG_CoA_synth_arch"/>
    <property type="match status" value="1"/>
</dbReference>
<dbReference type="InterPro" id="IPR013747">
    <property type="entry name" value="ACP_syn_III_C"/>
</dbReference>
<dbReference type="InterPro" id="IPR004656">
    <property type="entry name" value="HMG_CoA_Synthase"/>
</dbReference>
<dbReference type="InterPro" id="IPR016039">
    <property type="entry name" value="Thiolase-like"/>
</dbReference>
<dbReference type="NCBIfam" id="TIGR00748">
    <property type="entry name" value="HMG_CoA_syn_Arc"/>
    <property type="match status" value="1"/>
</dbReference>
<dbReference type="NCBIfam" id="NF003274">
    <property type="entry name" value="PRK04262.1"/>
    <property type="match status" value="1"/>
</dbReference>
<dbReference type="PANTHER" id="PTHR43323">
    <property type="entry name" value="3-HYDROXY-3-METHYLGLUTARYL COENZYME A SYNTHASE"/>
    <property type="match status" value="1"/>
</dbReference>
<dbReference type="PANTHER" id="PTHR43323:SF2">
    <property type="entry name" value="HYDROXYMETHYLGLUTARYL-COA SYNTHASE"/>
    <property type="match status" value="1"/>
</dbReference>
<dbReference type="Pfam" id="PF08541">
    <property type="entry name" value="ACP_syn_III_C"/>
    <property type="match status" value="1"/>
</dbReference>
<dbReference type="SUPFAM" id="SSF53901">
    <property type="entry name" value="Thiolase-like"/>
    <property type="match status" value="2"/>
</dbReference>
<reference key="1">
    <citation type="journal article" date="1997" name="Nature">
        <title>The complete genome sequence of the hyperthermophilic, sulphate-reducing archaeon Archaeoglobus fulgidus.</title>
        <authorList>
            <person name="Klenk H.-P."/>
            <person name="Clayton R.A."/>
            <person name="Tomb J.-F."/>
            <person name="White O."/>
            <person name="Nelson K.E."/>
            <person name="Ketchum K.A."/>
            <person name="Dodson R.J."/>
            <person name="Gwinn M.L."/>
            <person name="Hickey E.K."/>
            <person name="Peterson J.D."/>
            <person name="Richardson D.L."/>
            <person name="Kerlavage A.R."/>
            <person name="Graham D.E."/>
            <person name="Kyrpides N.C."/>
            <person name="Fleischmann R.D."/>
            <person name="Quackenbush J."/>
            <person name="Lee N.H."/>
            <person name="Sutton G.G."/>
            <person name="Gill S.R."/>
            <person name="Kirkness E.F."/>
            <person name="Dougherty B.A."/>
            <person name="McKenney K."/>
            <person name="Adams M.D."/>
            <person name="Loftus B.J."/>
            <person name="Peterson S.N."/>
            <person name="Reich C.I."/>
            <person name="McNeil L.K."/>
            <person name="Badger J.H."/>
            <person name="Glodek A."/>
            <person name="Zhou L."/>
            <person name="Overbeek R."/>
            <person name="Gocayne J.D."/>
            <person name="Weidman J.F."/>
            <person name="McDonald L.A."/>
            <person name="Utterback T.R."/>
            <person name="Cotton M.D."/>
            <person name="Spriggs T."/>
            <person name="Artiach P."/>
            <person name="Kaine B.P."/>
            <person name="Sykes S.M."/>
            <person name="Sadow P.W."/>
            <person name="D'Andrea K.P."/>
            <person name="Bowman C."/>
            <person name="Fujii C."/>
            <person name="Garland S.A."/>
            <person name="Mason T.M."/>
            <person name="Olsen G.J."/>
            <person name="Fraser C.M."/>
            <person name="Smith H.O."/>
            <person name="Woese C.R."/>
            <person name="Venter J.C."/>
        </authorList>
    </citation>
    <scope>NUCLEOTIDE SEQUENCE [LARGE SCALE GENOMIC DNA]</scope>
    <source>
        <strain>ATCC 49558 / DSM 4304 / JCM 9628 / NBRC 100126 / VC-16</strain>
    </source>
</reference>
<protein>
    <recommendedName>
        <fullName evidence="1">Hydroxymethylglutaryl-CoA synthase</fullName>
        <shortName evidence="1">HMG-CoA synthase</shortName>
        <shortName evidence="1">HMGCS</shortName>
        <ecNumber evidence="1">2.3.3.10</ecNumber>
    </recommendedName>
</protein>
<accession>O30256</accession>
<gene>
    <name type="ordered locus">AF_2415</name>
</gene>
<name>HMGCS_ARCFU</name>
<feature type="chain" id="PRO_0000057612" description="Hydroxymethylglutaryl-CoA synthase">
    <location>
        <begin position="1"/>
        <end position="343"/>
    </location>
</feature>
<feature type="active site" description="Proton donor/acceptor" evidence="1">
    <location>
        <position position="80"/>
    </location>
</feature>
<feature type="active site" description="Acyl-thioester intermediate" evidence="1">
    <location>
        <position position="112"/>
    </location>
</feature>
<feature type="active site" description="Proton donor/acceptor" evidence="1">
    <location>
        <position position="233"/>
    </location>
</feature>
<feature type="binding site" evidence="1">
    <location>
        <position position="28"/>
    </location>
    <ligand>
        <name>(3S)-3-hydroxy-3-methylglutaryl-CoA</name>
        <dbReference type="ChEBI" id="CHEBI:43074"/>
    </ligand>
</feature>
<feature type="binding site" evidence="1">
    <location>
        <position position="29"/>
    </location>
    <ligand>
        <name>(3S)-3-hydroxy-3-methylglutaryl-CoA</name>
        <dbReference type="ChEBI" id="CHEBI:43074"/>
    </ligand>
</feature>
<feature type="binding site" evidence="1">
    <location>
        <position position="112"/>
    </location>
    <ligand>
        <name>(3S)-3-hydroxy-3-methylglutaryl-CoA</name>
        <dbReference type="ChEBI" id="CHEBI:43074"/>
    </ligand>
</feature>
<feature type="binding site" evidence="1">
    <location>
        <position position="198"/>
    </location>
    <ligand>
        <name>CoA</name>
        <dbReference type="ChEBI" id="CHEBI:57287"/>
        <note>ligand shared with acetoacetyl-CoA thiolase</note>
    </ligand>
</feature>
<feature type="binding site" evidence="1">
    <location>
        <position position="200"/>
    </location>
    <ligand>
        <name>(3S)-3-hydroxy-3-methylglutaryl-CoA</name>
        <dbReference type="ChEBI" id="CHEBI:43074"/>
    </ligand>
</feature>
<feature type="binding site" evidence="1">
    <location>
        <position position="233"/>
    </location>
    <ligand>
        <name>(3S)-3-hydroxy-3-methylglutaryl-CoA</name>
        <dbReference type="ChEBI" id="CHEBI:43074"/>
    </ligand>
</feature>
<feature type="binding site" evidence="1">
    <location>
        <position position="238"/>
    </location>
    <ligand>
        <name>CoA</name>
        <dbReference type="ChEBI" id="CHEBI:57287"/>
        <note>ligand shared with acetoacetyl-CoA thiolase</note>
    </ligand>
</feature>
<feature type="binding site" evidence="1">
    <location>
        <position position="242"/>
    </location>
    <ligand>
        <name>(3S)-3-hydroxy-3-methylglutaryl-CoA</name>
        <dbReference type="ChEBI" id="CHEBI:43074"/>
    </ligand>
</feature>
<feature type="binding site" evidence="1">
    <location>
        <position position="265"/>
    </location>
    <ligand>
        <name>(3S)-3-hydroxy-3-methylglutaryl-CoA</name>
        <dbReference type="ChEBI" id="CHEBI:43074"/>
    </ligand>
</feature>
<feature type="binding site" evidence="1">
    <location>
        <position position="295"/>
    </location>
    <ligand>
        <name>(3S)-3-hydroxy-3-methylglutaryl-CoA</name>
        <dbReference type="ChEBI" id="CHEBI:43074"/>
    </ligand>
</feature>
<comment type="function">
    <text evidence="1">Catalyzes the condensation of acetyl-CoA with acetoacetyl-CoA to form 3-hydroxy-3-methylglutaryl-CoA (HMG-CoA). Functions in the mevalonate (MVA) pathway leading to isopentenyl diphosphate (IPP), a key precursor for the biosynthesis of isoprenoid compounds that are building blocks of archaeal membrane lipids.</text>
</comment>
<comment type="catalytic activity">
    <reaction evidence="1">
        <text>acetoacetyl-CoA + acetyl-CoA + H2O = (3S)-3-hydroxy-3-methylglutaryl-CoA + CoA + H(+)</text>
        <dbReference type="Rhea" id="RHEA:10188"/>
        <dbReference type="ChEBI" id="CHEBI:15377"/>
        <dbReference type="ChEBI" id="CHEBI:15378"/>
        <dbReference type="ChEBI" id="CHEBI:43074"/>
        <dbReference type="ChEBI" id="CHEBI:57286"/>
        <dbReference type="ChEBI" id="CHEBI:57287"/>
        <dbReference type="ChEBI" id="CHEBI:57288"/>
        <dbReference type="EC" id="2.3.3.10"/>
    </reaction>
    <physiologicalReaction direction="left-to-right" evidence="1">
        <dbReference type="Rhea" id="RHEA:10189"/>
    </physiologicalReaction>
</comment>
<comment type="pathway">
    <text evidence="1">Metabolic intermediate biosynthesis; (R)-mevalonate biosynthesis; (R)-mevalonate from acetyl-CoA: step 2/3.</text>
</comment>
<comment type="subunit">
    <text evidence="1">Interacts with acetoacetyl-CoA thiolase that catalyzes the precedent step in the pathway and with a DUF35 protein. The acetoacetyl-CoA thiolase/HMG-CoA synthase complex channels the intermediate via a fused CoA-binding site, which allows for efficient coupling of the endergonic thiolase reaction with the exergonic HMGCS reaction.</text>
</comment>
<comment type="similarity">
    <text evidence="1">Belongs to the thiolase-like superfamily. Archaeal HMG-CoA synthase family.</text>
</comment>
<comment type="sequence caution" evidence="2">
    <conflict type="frameshift">
        <sequence resource="EMBL-CDS" id="AAB91251"/>
    </conflict>
</comment>
<sequence length="343" mass="37143">MIGIVSYGSYVPKFRIRVEEIARVWGEDAKKIKDGLGVHEKSVPGMDEDAATIAVEAAREAIRRAGINPEEIGAVFVGSESHPYAVKPTATIVGEALGVGNDYFAADLEFACKAGTAGMQICYSMVKAGMIKYGLAIGADTSQARPGDALEYAAAAGGAAFIIGENPIAEVEATYSFTSDTPDFWRRDLQPYPSHGGRFTGLPAYFRHVISAAKGLMEKYGYKVEDFDYAVFHMPNAKFPVRAAKMLGFSMEHISQGLVVKAIGNTYSGSSLLGLAATLDVAEPDERILLVSFGSGAGSDAFAIRVTDAIENYPREPKVWEKIERKAYVDYAIYLKHRRKIKA</sequence>